<name>RM37_MOUSE</name>
<feature type="transit peptide" description="Mitochondrion" evidence="1">
    <location>
        <begin position="1"/>
        <end position="29"/>
    </location>
</feature>
<feature type="chain" id="PRO_0000045906" description="Large ribosomal subunit protein mL37">
    <location>
        <begin position="30"/>
        <end position="423"/>
    </location>
</feature>
<accession>Q921S7</accession>
<keyword id="KW-0496">Mitochondrion</keyword>
<keyword id="KW-1185">Reference proteome</keyword>
<keyword id="KW-0687">Ribonucleoprotein</keyword>
<keyword id="KW-0689">Ribosomal protein</keyword>
<keyword id="KW-0809">Transit peptide</keyword>
<comment type="subunit">
    <text evidence="2">Component of the mitochondrial ribosome large subunit (39S) which comprises a 16S rRNA and about 50 distinct proteins.</text>
</comment>
<comment type="subcellular location">
    <subcellularLocation>
        <location evidence="2">Mitochondrion</location>
    </subcellularLocation>
</comment>
<comment type="similarity">
    <text evidence="3">Belongs to the mitochondrion-specific ribosomal protein mL37 family.</text>
</comment>
<sequence>MALASGPALRALAGSGRLGLGGYGTPKRGAYEWGVRSTRKPEPRPLDRVYEIPGLEPITYEGKKHFVPWLARPIFPPWERGWNDPRFHRAAPIHEQTLYKEEPCYIFHQRCRLLEGMKQALWLTKTKLIEGLPKKVLSLVDDPANHIENQEQRVLDIISHARLWHSTEDIPKRETYCPLIVDSLIQLCKSQILKHPSLARRTSAQNCTLATTWNRESLLLQVRGTSSTILSAKDPLPVIASREEVEATRSHVLETFYPISPTIDLQECHVYEVKDDTGFQEGYPYPHPHTLYFLEKANLRPQRFLPEQLRAKMLLFAFANALAQARLLYGNTAKVLEQPIVVQSVGTDGRVFQFLVLQLNTTDLASSEGVKNLVWTDSDQLLYRHFWCRPVIKKKVVVEPVGPVDFQPETFRKFLALYLHGVV</sequence>
<proteinExistence type="evidence at protein level"/>
<protein>
    <recommendedName>
        <fullName evidence="3">Large ribosomal subunit protein mL37</fullName>
    </recommendedName>
    <alternativeName>
        <fullName>39S ribosomal protein L37, mitochondrial</fullName>
        <shortName>L37mt</shortName>
        <shortName>MRP-L37</shortName>
    </alternativeName>
</protein>
<gene>
    <name type="primary">Mrpl37</name>
</gene>
<organism>
    <name type="scientific">Mus musculus</name>
    <name type="common">Mouse</name>
    <dbReference type="NCBI Taxonomy" id="10090"/>
    <lineage>
        <taxon>Eukaryota</taxon>
        <taxon>Metazoa</taxon>
        <taxon>Chordata</taxon>
        <taxon>Craniata</taxon>
        <taxon>Vertebrata</taxon>
        <taxon>Euteleostomi</taxon>
        <taxon>Mammalia</taxon>
        <taxon>Eutheria</taxon>
        <taxon>Euarchontoglires</taxon>
        <taxon>Glires</taxon>
        <taxon>Rodentia</taxon>
        <taxon>Myomorpha</taxon>
        <taxon>Muroidea</taxon>
        <taxon>Muridae</taxon>
        <taxon>Murinae</taxon>
        <taxon>Mus</taxon>
        <taxon>Mus</taxon>
    </lineage>
</organism>
<evidence type="ECO:0000250" key="1"/>
<evidence type="ECO:0000250" key="2">
    <source>
        <dbReference type="UniProtKB" id="Q9BZE1"/>
    </source>
</evidence>
<evidence type="ECO:0000305" key="3"/>
<dbReference type="EMBL" id="AK161818">
    <property type="protein sequence ID" value="BAE36590.1"/>
    <property type="molecule type" value="mRNA"/>
</dbReference>
<dbReference type="EMBL" id="AK167461">
    <property type="protein sequence ID" value="BAE39546.1"/>
    <property type="molecule type" value="mRNA"/>
</dbReference>
<dbReference type="EMBL" id="BC011065">
    <property type="protein sequence ID" value="AAH11065.1"/>
    <property type="molecule type" value="mRNA"/>
</dbReference>
<dbReference type="EMBL" id="BC028257">
    <property type="protein sequence ID" value="AAH28257.1"/>
    <property type="molecule type" value="mRNA"/>
</dbReference>
<dbReference type="CCDS" id="CCDS18429.1"/>
<dbReference type="RefSeq" id="NP_079776.1">
    <property type="nucleotide sequence ID" value="NM_025500.3"/>
</dbReference>
<dbReference type="SMR" id="Q921S7"/>
<dbReference type="BioGRID" id="207874">
    <property type="interactions" value="33"/>
</dbReference>
<dbReference type="ComplexPortal" id="CPX-5302">
    <property type="entry name" value="39S mitochondrial large ribosomal subunit"/>
</dbReference>
<dbReference type="FunCoup" id="Q921S7">
    <property type="interactions" value="1349"/>
</dbReference>
<dbReference type="STRING" id="10090.ENSMUSP00000030365"/>
<dbReference type="GlyGen" id="Q921S7">
    <property type="glycosylation" value="2 sites, 2 N-linked glycans (2 sites)"/>
</dbReference>
<dbReference type="iPTMnet" id="Q921S7"/>
<dbReference type="PhosphoSitePlus" id="Q921S7"/>
<dbReference type="SwissPalm" id="Q921S7"/>
<dbReference type="jPOST" id="Q921S7"/>
<dbReference type="PaxDb" id="10090-ENSMUSP00000030365"/>
<dbReference type="PeptideAtlas" id="Q921S7"/>
<dbReference type="ProteomicsDB" id="260980"/>
<dbReference type="Pumba" id="Q921S7"/>
<dbReference type="Antibodypedia" id="19283">
    <property type="antibodies" value="82 antibodies from 23 providers"/>
</dbReference>
<dbReference type="DNASU" id="56280"/>
<dbReference type="Ensembl" id="ENSMUST00000030365.6">
    <property type="protein sequence ID" value="ENSMUSP00000030365.6"/>
    <property type="gene ID" value="ENSMUSG00000028622.12"/>
</dbReference>
<dbReference type="GeneID" id="56280"/>
<dbReference type="KEGG" id="mmu:56280"/>
<dbReference type="UCSC" id="uc008tza.2">
    <property type="organism name" value="mouse"/>
</dbReference>
<dbReference type="AGR" id="MGI:1926268"/>
<dbReference type="CTD" id="51253"/>
<dbReference type="MGI" id="MGI:1926268">
    <property type="gene designation" value="Mrpl37"/>
</dbReference>
<dbReference type="VEuPathDB" id="HostDB:ENSMUSG00000028622"/>
<dbReference type="eggNOG" id="ENOG502QQAQ">
    <property type="taxonomic scope" value="Eukaryota"/>
</dbReference>
<dbReference type="GeneTree" id="ENSGT00390000000867"/>
<dbReference type="HOGENOM" id="CLU_037022_1_0_1"/>
<dbReference type="InParanoid" id="Q921S7"/>
<dbReference type="OMA" id="WERGWHD"/>
<dbReference type="OrthoDB" id="5835618at2759"/>
<dbReference type="PhylomeDB" id="Q921S7"/>
<dbReference type="TreeFam" id="TF323297"/>
<dbReference type="Reactome" id="R-MMU-5389840">
    <property type="pathway name" value="Mitochondrial translation elongation"/>
</dbReference>
<dbReference type="Reactome" id="R-MMU-5419276">
    <property type="pathway name" value="Mitochondrial translation termination"/>
</dbReference>
<dbReference type="BioGRID-ORCS" id="56280">
    <property type="hits" value="27 hits in 80 CRISPR screens"/>
</dbReference>
<dbReference type="PRO" id="PR:Q921S7"/>
<dbReference type="Proteomes" id="UP000000589">
    <property type="component" value="Chromosome 4"/>
</dbReference>
<dbReference type="RNAct" id="Q921S7">
    <property type="molecule type" value="protein"/>
</dbReference>
<dbReference type="Bgee" id="ENSMUSG00000028622">
    <property type="expression patterns" value="Expressed in undifferentiated genital tubercle and 258 other cell types or tissues"/>
</dbReference>
<dbReference type="GO" id="GO:0005743">
    <property type="term" value="C:mitochondrial inner membrane"/>
    <property type="evidence" value="ECO:0000303"/>
    <property type="project" value="ComplexPortal"/>
</dbReference>
<dbReference type="GO" id="GO:0005762">
    <property type="term" value="C:mitochondrial large ribosomal subunit"/>
    <property type="evidence" value="ECO:0000250"/>
    <property type="project" value="UniProtKB"/>
</dbReference>
<dbReference type="GO" id="GO:0005761">
    <property type="term" value="C:mitochondrial ribosome"/>
    <property type="evidence" value="ECO:0000250"/>
    <property type="project" value="MGI"/>
</dbReference>
<dbReference type="GO" id="GO:0005739">
    <property type="term" value="C:mitochondrion"/>
    <property type="evidence" value="ECO:0007005"/>
    <property type="project" value="MGI"/>
</dbReference>
<dbReference type="GO" id="GO:0003735">
    <property type="term" value="F:structural constituent of ribosome"/>
    <property type="evidence" value="ECO:0007669"/>
    <property type="project" value="InterPro"/>
</dbReference>
<dbReference type="GO" id="GO:0032543">
    <property type="term" value="P:mitochondrial translation"/>
    <property type="evidence" value="ECO:0000303"/>
    <property type="project" value="ComplexPortal"/>
</dbReference>
<dbReference type="InterPro" id="IPR052482">
    <property type="entry name" value="mtLSU_mL37"/>
</dbReference>
<dbReference type="InterPro" id="IPR010793">
    <property type="entry name" value="Ribosomal_mL37/mL65"/>
</dbReference>
<dbReference type="PANTHER" id="PTHR15889:SF2">
    <property type="entry name" value="LARGE RIBOSOMAL SUBUNIT PROTEIN ML37"/>
    <property type="match status" value="1"/>
</dbReference>
<dbReference type="PANTHER" id="PTHR15889">
    <property type="entry name" value="MITOCHONDRIAL RIBOSOMAL PROTEIN L37"/>
    <property type="match status" value="1"/>
</dbReference>
<dbReference type="Pfam" id="PF07147">
    <property type="entry name" value="PDCD9"/>
    <property type="match status" value="1"/>
</dbReference>
<reference key="1">
    <citation type="journal article" date="2005" name="Science">
        <title>The transcriptional landscape of the mammalian genome.</title>
        <authorList>
            <person name="Carninci P."/>
            <person name="Kasukawa T."/>
            <person name="Katayama S."/>
            <person name="Gough J."/>
            <person name="Frith M.C."/>
            <person name="Maeda N."/>
            <person name="Oyama R."/>
            <person name="Ravasi T."/>
            <person name="Lenhard B."/>
            <person name="Wells C."/>
            <person name="Kodzius R."/>
            <person name="Shimokawa K."/>
            <person name="Bajic V.B."/>
            <person name="Brenner S.E."/>
            <person name="Batalov S."/>
            <person name="Forrest A.R."/>
            <person name="Zavolan M."/>
            <person name="Davis M.J."/>
            <person name="Wilming L.G."/>
            <person name="Aidinis V."/>
            <person name="Allen J.E."/>
            <person name="Ambesi-Impiombato A."/>
            <person name="Apweiler R."/>
            <person name="Aturaliya R.N."/>
            <person name="Bailey T.L."/>
            <person name="Bansal M."/>
            <person name="Baxter L."/>
            <person name="Beisel K.W."/>
            <person name="Bersano T."/>
            <person name="Bono H."/>
            <person name="Chalk A.M."/>
            <person name="Chiu K.P."/>
            <person name="Choudhary V."/>
            <person name="Christoffels A."/>
            <person name="Clutterbuck D.R."/>
            <person name="Crowe M.L."/>
            <person name="Dalla E."/>
            <person name="Dalrymple B.P."/>
            <person name="de Bono B."/>
            <person name="Della Gatta G."/>
            <person name="di Bernardo D."/>
            <person name="Down T."/>
            <person name="Engstrom P."/>
            <person name="Fagiolini M."/>
            <person name="Faulkner G."/>
            <person name="Fletcher C.F."/>
            <person name="Fukushima T."/>
            <person name="Furuno M."/>
            <person name="Futaki S."/>
            <person name="Gariboldi M."/>
            <person name="Georgii-Hemming P."/>
            <person name="Gingeras T.R."/>
            <person name="Gojobori T."/>
            <person name="Green R.E."/>
            <person name="Gustincich S."/>
            <person name="Harbers M."/>
            <person name="Hayashi Y."/>
            <person name="Hensch T.K."/>
            <person name="Hirokawa N."/>
            <person name="Hill D."/>
            <person name="Huminiecki L."/>
            <person name="Iacono M."/>
            <person name="Ikeo K."/>
            <person name="Iwama A."/>
            <person name="Ishikawa T."/>
            <person name="Jakt M."/>
            <person name="Kanapin A."/>
            <person name="Katoh M."/>
            <person name="Kawasawa Y."/>
            <person name="Kelso J."/>
            <person name="Kitamura H."/>
            <person name="Kitano H."/>
            <person name="Kollias G."/>
            <person name="Krishnan S.P."/>
            <person name="Kruger A."/>
            <person name="Kummerfeld S.K."/>
            <person name="Kurochkin I.V."/>
            <person name="Lareau L.F."/>
            <person name="Lazarevic D."/>
            <person name="Lipovich L."/>
            <person name="Liu J."/>
            <person name="Liuni S."/>
            <person name="McWilliam S."/>
            <person name="Madan Babu M."/>
            <person name="Madera M."/>
            <person name="Marchionni L."/>
            <person name="Matsuda H."/>
            <person name="Matsuzawa S."/>
            <person name="Miki H."/>
            <person name="Mignone F."/>
            <person name="Miyake S."/>
            <person name="Morris K."/>
            <person name="Mottagui-Tabar S."/>
            <person name="Mulder N."/>
            <person name="Nakano N."/>
            <person name="Nakauchi H."/>
            <person name="Ng P."/>
            <person name="Nilsson R."/>
            <person name="Nishiguchi S."/>
            <person name="Nishikawa S."/>
            <person name="Nori F."/>
            <person name="Ohara O."/>
            <person name="Okazaki Y."/>
            <person name="Orlando V."/>
            <person name="Pang K.C."/>
            <person name="Pavan W.J."/>
            <person name="Pavesi G."/>
            <person name="Pesole G."/>
            <person name="Petrovsky N."/>
            <person name="Piazza S."/>
            <person name="Reed J."/>
            <person name="Reid J.F."/>
            <person name="Ring B.Z."/>
            <person name="Ringwald M."/>
            <person name="Rost B."/>
            <person name="Ruan Y."/>
            <person name="Salzberg S.L."/>
            <person name="Sandelin A."/>
            <person name="Schneider C."/>
            <person name="Schoenbach C."/>
            <person name="Sekiguchi K."/>
            <person name="Semple C.A."/>
            <person name="Seno S."/>
            <person name="Sessa L."/>
            <person name="Sheng Y."/>
            <person name="Shibata Y."/>
            <person name="Shimada H."/>
            <person name="Shimada K."/>
            <person name="Silva D."/>
            <person name="Sinclair B."/>
            <person name="Sperling S."/>
            <person name="Stupka E."/>
            <person name="Sugiura K."/>
            <person name="Sultana R."/>
            <person name="Takenaka Y."/>
            <person name="Taki K."/>
            <person name="Tammoja K."/>
            <person name="Tan S.L."/>
            <person name="Tang S."/>
            <person name="Taylor M.S."/>
            <person name="Tegner J."/>
            <person name="Teichmann S.A."/>
            <person name="Ueda H.R."/>
            <person name="van Nimwegen E."/>
            <person name="Verardo R."/>
            <person name="Wei C.L."/>
            <person name="Yagi K."/>
            <person name="Yamanishi H."/>
            <person name="Zabarovsky E."/>
            <person name="Zhu S."/>
            <person name="Zimmer A."/>
            <person name="Hide W."/>
            <person name="Bult C."/>
            <person name="Grimmond S.M."/>
            <person name="Teasdale R.D."/>
            <person name="Liu E.T."/>
            <person name="Brusic V."/>
            <person name="Quackenbush J."/>
            <person name="Wahlestedt C."/>
            <person name="Mattick J.S."/>
            <person name="Hume D.A."/>
            <person name="Kai C."/>
            <person name="Sasaki D."/>
            <person name="Tomaru Y."/>
            <person name="Fukuda S."/>
            <person name="Kanamori-Katayama M."/>
            <person name="Suzuki M."/>
            <person name="Aoki J."/>
            <person name="Arakawa T."/>
            <person name="Iida J."/>
            <person name="Imamura K."/>
            <person name="Itoh M."/>
            <person name="Kato T."/>
            <person name="Kawaji H."/>
            <person name="Kawagashira N."/>
            <person name="Kawashima T."/>
            <person name="Kojima M."/>
            <person name="Kondo S."/>
            <person name="Konno H."/>
            <person name="Nakano K."/>
            <person name="Ninomiya N."/>
            <person name="Nishio T."/>
            <person name="Okada M."/>
            <person name="Plessy C."/>
            <person name="Shibata K."/>
            <person name="Shiraki T."/>
            <person name="Suzuki S."/>
            <person name="Tagami M."/>
            <person name="Waki K."/>
            <person name="Watahiki A."/>
            <person name="Okamura-Oho Y."/>
            <person name="Suzuki H."/>
            <person name="Kawai J."/>
            <person name="Hayashizaki Y."/>
        </authorList>
    </citation>
    <scope>NUCLEOTIDE SEQUENCE [LARGE SCALE MRNA]</scope>
    <source>
        <strain>C57BL/6J</strain>
        <tissue>Liver</tissue>
        <tissue>Testis</tissue>
    </source>
</reference>
<reference key="2">
    <citation type="journal article" date="2004" name="Genome Res.">
        <title>The status, quality, and expansion of the NIH full-length cDNA project: the Mammalian Gene Collection (MGC).</title>
        <authorList>
            <consortium name="The MGC Project Team"/>
        </authorList>
    </citation>
    <scope>NUCLEOTIDE SEQUENCE [LARGE SCALE MRNA]</scope>
    <source>
        <strain>FVB/N</strain>
        <tissue>Colon</tissue>
        <tissue>Mammary tumor</tissue>
    </source>
</reference>
<reference key="3">
    <citation type="journal article" date="2010" name="Cell">
        <title>A tissue-specific atlas of mouse protein phosphorylation and expression.</title>
        <authorList>
            <person name="Huttlin E.L."/>
            <person name="Jedrychowski M.P."/>
            <person name="Elias J.E."/>
            <person name="Goswami T."/>
            <person name="Rad R."/>
            <person name="Beausoleil S.A."/>
            <person name="Villen J."/>
            <person name="Haas W."/>
            <person name="Sowa M.E."/>
            <person name="Gygi S.P."/>
        </authorList>
    </citation>
    <scope>IDENTIFICATION BY MASS SPECTROMETRY [LARGE SCALE ANALYSIS]</scope>
    <source>
        <tissue>Brain</tissue>
        <tissue>Brown adipose tissue</tissue>
        <tissue>Heart</tissue>
        <tissue>Kidney</tissue>
        <tissue>Liver</tissue>
        <tissue>Pancreas</tissue>
        <tissue>Spleen</tissue>
    </source>
</reference>